<feature type="chain" id="PRO_0000217216" description="Small, acid-soluble spore protein P">
    <location>
        <begin position="1"/>
        <end position="50"/>
    </location>
</feature>
<feature type="region of interest" description="Disordered" evidence="2">
    <location>
        <begin position="1"/>
        <end position="50"/>
    </location>
</feature>
<feature type="compositionally biased region" description="Basic residues" evidence="2">
    <location>
        <begin position="33"/>
        <end position="50"/>
    </location>
</feature>
<evidence type="ECO:0000255" key="1">
    <source>
        <dbReference type="HAMAP-Rule" id="MF_00666"/>
    </source>
</evidence>
<evidence type="ECO:0000256" key="2">
    <source>
        <dbReference type="SAM" id="MobiDB-lite"/>
    </source>
</evidence>
<keyword id="KW-1185">Reference proteome</keyword>
<keyword id="KW-0749">Sporulation</keyword>
<proteinExistence type="inferred from homology"/>
<sequence length="50" mass="5612">MSKRKMGPKQQKNPELPKSPEQPYGEPLSGSKKEKKANHSGQKHNPHHGL</sequence>
<comment type="subcellular location">
    <subcellularLocation>
        <location evidence="1">Spore core</location>
    </subcellularLocation>
</comment>
<comment type="induction">
    <text evidence="1">Expressed only in the forespore compartment of sporulating cells.</text>
</comment>
<comment type="similarity">
    <text evidence="1">Belongs to the SspP family.</text>
</comment>
<gene>
    <name evidence="1" type="primary">sspP</name>
    <name type="ordered locus">OB1020</name>
</gene>
<dbReference type="EMBL" id="BA000028">
    <property type="protein sequence ID" value="BAC12976.1"/>
    <property type="molecule type" value="Genomic_DNA"/>
</dbReference>
<dbReference type="RefSeq" id="WP_011065422.1">
    <property type="nucleotide sequence ID" value="NC_004193.1"/>
</dbReference>
<dbReference type="SMR" id="Q8CUT7"/>
<dbReference type="STRING" id="221109.gene:10733258"/>
<dbReference type="KEGG" id="oih:OB1020"/>
<dbReference type="eggNOG" id="ENOG50306WB">
    <property type="taxonomic scope" value="Bacteria"/>
</dbReference>
<dbReference type="HOGENOM" id="CLU_3124111_0_0_9"/>
<dbReference type="OrthoDB" id="2691914at2"/>
<dbReference type="Proteomes" id="UP000000822">
    <property type="component" value="Chromosome"/>
</dbReference>
<dbReference type="GO" id="GO:0030436">
    <property type="term" value="P:asexual sporulation"/>
    <property type="evidence" value="ECO:0007669"/>
    <property type="project" value="UniProtKB-UniRule"/>
</dbReference>
<dbReference type="GO" id="GO:0030435">
    <property type="term" value="P:sporulation resulting in formation of a cellular spore"/>
    <property type="evidence" value="ECO:0007669"/>
    <property type="project" value="UniProtKB-KW"/>
</dbReference>
<dbReference type="HAMAP" id="MF_00666">
    <property type="entry name" value="SspP"/>
    <property type="match status" value="1"/>
</dbReference>
<dbReference type="InterPro" id="IPR012614">
    <property type="entry name" value="SASP_SspP"/>
</dbReference>
<dbReference type="Pfam" id="PF08179">
    <property type="entry name" value="SspP"/>
    <property type="match status" value="1"/>
</dbReference>
<protein>
    <recommendedName>
        <fullName evidence="1">Small, acid-soluble spore protein P</fullName>
        <shortName evidence="1">SASP P</shortName>
    </recommendedName>
</protein>
<name>SSPP_OCEIH</name>
<accession>Q8CUT7</accession>
<organism>
    <name type="scientific">Oceanobacillus iheyensis (strain DSM 14371 / CIP 107618 / JCM 11309 / KCTC 3954 / HTE831)</name>
    <dbReference type="NCBI Taxonomy" id="221109"/>
    <lineage>
        <taxon>Bacteria</taxon>
        <taxon>Bacillati</taxon>
        <taxon>Bacillota</taxon>
        <taxon>Bacilli</taxon>
        <taxon>Bacillales</taxon>
        <taxon>Bacillaceae</taxon>
        <taxon>Oceanobacillus</taxon>
    </lineage>
</organism>
<reference key="1">
    <citation type="journal article" date="2002" name="Nucleic Acids Res.">
        <title>Genome sequence of Oceanobacillus iheyensis isolated from the Iheya Ridge and its unexpected adaptive capabilities to extreme environments.</title>
        <authorList>
            <person name="Takami H."/>
            <person name="Takaki Y."/>
            <person name="Uchiyama I."/>
        </authorList>
    </citation>
    <scope>NUCLEOTIDE SEQUENCE [LARGE SCALE GENOMIC DNA]</scope>
    <source>
        <strain>DSM 14371 / CIP 107618 / JCM 11309 / KCTC 3954 / HTE831</strain>
    </source>
</reference>